<gene>
    <name type="primary">ankrd1</name>
</gene>
<feature type="chain" id="PRO_0000240486" description="Ankyrin repeat domain-containing protein 1">
    <location>
        <begin position="1"/>
        <end position="318"/>
    </location>
</feature>
<feature type="repeat" description="ANK 1">
    <location>
        <begin position="118"/>
        <end position="147"/>
    </location>
</feature>
<feature type="repeat" description="ANK 2">
    <location>
        <begin position="151"/>
        <end position="180"/>
    </location>
</feature>
<feature type="repeat" description="ANK 3">
    <location>
        <begin position="184"/>
        <end position="213"/>
    </location>
</feature>
<feature type="repeat" description="ANK 4">
    <location>
        <begin position="217"/>
        <end position="246"/>
    </location>
</feature>
<feature type="repeat" description="ANK 5">
    <location>
        <begin position="250"/>
        <end position="279"/>
    </location>
</feature>
<feature type="repeat" description="ANK 6">
    <location>
        <begin position="283"/>
        <end position="314"/>
    </location>
</feature>
<feature type="coiled-coil region" evidence="2">
    <location>
        <begin position="37"/>
        <end position="77"/>
    </location>
</feature>
<name>ANKR1_XENTR</name>
<protein>
    <recommendedName>
        <fullName>Ankyrin repeat domain-containing protein 1</fullName>
    </recommendedName>
</protein>
<keyword id="KW-0040">ANK repeat</keyword>
<keyword id="KW-0175">Coiled coil</keyword>
<keyword id="KW-0539">Nucleus</keyword>
<keyword id="KW-1185">Reference proteome</keyword>
<keyword id="KW-0677">Repeat</keyword>
<proteinExistence type="evidence at transcript level"/>
<accession>Q5BKI6</accession>
<comment type="function">
    <text evidence="1">May act as a nuclear transcription factor that negatively regulates the expression of cardiac genes.</text>
</comment>
<comment type="subcellular location">
    <subcellularLocation>
        <location evidence="1">Nucleus</location>
    </subcellularLocation>
</comment>
<organism>
    <name type="scientific">Xenopus tropicalis</name>
    <name type="common">Western clawed frog</name>
    <name type="synonym">Silurana tropicalis</name>
    <dbReference type="NCBI Taxonomy" id="8364"/>
    <lineage>
        <taxon>Eukaryota</taxon>
        <taxon>Metazoa</taxon>
        <taxon>Chordata</taxon>
        <taxon>Craniata</taxon>
        <taxon>Vertebrata</taxon>
        <taxon>Euteleostomi</taxon>
        <taxon>Amphibia</taxon>
        <taxon>Batrachia</taxon>
        <taxon>Anura</taxon>
        <taxon>Pipoidea</taxon>
        <taxon>Pipidae</taxon>
        <taxon>Xenopodinae</taxon>
        <taxon>Xenopus</taxon>
        <taxon>Silurana</taxon>
    </lineage>
</organism>
<evidence type="ECO:0000250" key="1"/>
<evidence type="ECO:0000255" key="2"/>
<dbReference type="EMBL" id="BC091060">
    <property type="protein sequence ID" value="AAH91060.1"/>
    <property type="molecule type" value="mRNA"/>
</dbReference>
<dbReference type="RefSeq" id="NP_001025607.1">
    <property type="nucleotide sequence ID" value="NM_001030436.1"/>
</dbReference>
<dbReference type="SMR" id="Q5BKI6"/>
<dbReference type="STRING" id="8364.ENSXETP00000046925"/>
<dbReference type="PaxDb" id="8364-ENSXETP00000047089"/>
<dbReference type="DNASU" id="594995"/>
<dbReference type="GeneID" id="594995"/>
<dbReference type="KEGG" id="xtr:594995"/>
<dbReference type="AGR" id="Xenbase:XB-GENE-974650"/>
<dbReference type="CTD" id="27063"/>
<dbReference type="Xenbase" id="XB-GENE-974650">
    <property type="gene designation" value="ankrd1"/>
</dbReference>
<dbReference type="eggNOG" id="KOG0504">
    <property type="taxonomic scope" value="Eukaryota"/>
</dbReference>
<dbReference type="HOGENOM" id="CLU_000134_11_1_1"/>
<dbReference type="InParanoid" id="Q5BKI6"/>
<dbReference type="OMA" id="QYDCGEH"/>
<dbReference type="OrthoDB" id="426293at2759"/>
<dbReference type="PhylomeDB" id="Q5BKI6"/>
<dbReference type="Proteomes" id="UP000008143">
    <property type="component" value="Chromosome 7"/>
</dbReference>
<dbReference type="Bgee" id="ENSXETG00000021783">
    <property type="expression patterns" value="Expressed in skeletal muscle tissue and 5 other cell types or tissues"/>
</dbReference>
<dbReference type="ExpressionAtlas" id="Q5BKI6">
    <property type="expression patterns" value="differential"/>
</dbReference>
<dbReference type="GO" id="GO:0005737">
    <property type="term" value="C:cytoplasm"/>
    <property type="evidence" value="ECO:0007669"/>
    <property type="project" value="UniProtKB-ARBA"/>
</dbReference>
<dbReference type="GO" id="GO:0005634">
    <property type="term" value="C:nucleus"/>
    <property type="evidence" value="ECO:0007669"/>
    <property type="project" value="UniProtKB-SubCell"/>
</dbReference>
<dbReference type="FunFam" id="1.25.40.20:FF:000111">
    <property type="entry name" value="Ankyrin repeat domain-containing protein 1"/>
    <property type="match status" value="1"/>
</dbReference>
<dbReference type="FunFam" id="1.25.40.20:FF:000183">
    <property type="entry name" value="ankyrin repeat domain-containing protein 1"/>
    <property type="match status" value="1"/>
</dbReference>
<dbReference type="Gene3D" id="1.25.40.20">
    <property type="entry name" value="Ankyrin repeat-containing domain"/>
    <property type="match status" value="2"/>
</dbReference>
<dbReference type="InterPro" id="IPR002110">
    <property type="entry name" value="Ankyrin_rpt"/>
</dbReference>
<dbReference type="InterPro" id="IPR036770">
    <property type="entry name" value="Ankyrin_rpt-contain_sf"/>
</dbReference>
<dbReference type="PANTHER" id="PTHR24126:SF7">
    <property type="entry name" value="ANKYRIN REPEAT DOMAIN-CONTAINING PROTEIN 1"/>
    <property type="match status" value="1"/>
</dbReference>
<dbReference type="PANTHER" id="PTHR24126">
    <property type="entry name" value="ANKYRIN REPEAT, PH AND SEC7 DOMAIN CONTAINING PROTEIN SECG-RELATED"/>
    <property type="match status" value="1"/>
</dbReference>
<dbReference type="Pfam" id="PF00023">
    <property type="entry name" value="Ank"/>
    <property type="match status" value="1"/>
</dbReference>
<dbReference type="Pfam" id="PF12796">
    <property type="entry name" value="Ank_2"/>
    <property type="match status" value="2"/>
</dbReference>
<dbReference type="PRINTS" id="PR01415">
    <property type="entry name" value="ANKYRIN"/>
</dbReference>
<dbReference type="SMART" id="SM00248">
    <property type="entry name" value="ANK"/>
    <property type="match status" value="4"/>
</dbReference>
<dbReference type="SUPFAM" id="SSF48403">
    <property type="entry name" value="Ankyrin repeat"/>
    <property type="match status" value="1"/>
</dbReference>
<dbReference type="PROSITE" id="PS50297">
    <property type="entry name" value="ANK_REP_REGION"/>
    <property type="match status" value="1"/>
</dbReference>
<dbReference type="PROSITE" id="PS50088">
    <property type="entry name" value="ANK_REPEAT"/>
    <property type="match status" value="4"/>
</dbReference>
<reference key="1">
    <citation type="submission" date="2005-03" db="EMBL/GenBank/DDBJ databases">
        <authorList>
            <consortium name="NIH - Xenopus Gene Collection (XGC) project"/>
        </authorList>
    </citation>
    <scope>NUCLEOTIDE SEQUENCE [LARGE SCALE MRNA]</scope>
</reference>
<sequence length="318" mass="36231">MLLKMEEMVPEKKNEMKKTSNFVAGVSKNGEYETAVALEKQEDLKTTSKSLIELEEEKQIKEKQLKSELLKKKLEERPKLDNLEDLQTIINLKKRKRVKKVHVPVVKEPEPEEIIENVDQTTFFKAALDNKMPVIEKYLADGGDPNTCDEYKRTALHRACSEGHTDMVEKLIEAGANIEFKDMLESTALHWTCRGGSVETLKLLLNKGAAINARDKLLSTPLHVAVRTGHYECAEHLIACEADLHARDREGDTPMHDGVRLNRYKMMRLLILYGVDLNIKNSAGKTPMELVMQWQNGAKEIFNGLQSKSYKNSHISKF</sequence>